<feature type="chain" id="PRO_0000217172" description="Putative hydro-lyase SAV_6940">
    <location>
        <begin position="1"/>
        <end position="274"/>
    </location>
</feature>
<evidence type="ECO:0000255" key="1">
    <source>
        <dbReference type="HAMAP-Rule" id="MF_01830"/>
    </source>
</evidence>
<dbReference type="EC" id="4.2.1.-" evidence="1"/>
<dbReference type="EMBL" id="BA000030">
    <property type="protein sequence ID" value="BAC74651.1"/>
    <property type="molecule type" value="Genomic_DNA"/>
</dbReference>
<dbReference type="RefSeq" id="WP_010988337.1">
    <property type="nucleotide sequence ID" value="NZ_JZJK01000082.1"/>
</dbReference>
<dbReference type="SMR" id="Q827I4"/>
<dbReference type="GeneID" id="41544013"/>
<dbReference type="KEGG" id="sma:SAVERM_6940"/>
<dbReference type="eggNOG" id="COG4336">
    <property type="taxonomic scope" value="Bacteria"/>
</dbReference>
<dbReference type="HOGENOM" id="CLU_059759_0_0_11"/>
<dbReference type="OrthoDB" id="149585at2"/>
<dbReference type="Proteomes" id="UP000000428">
    <property type="component" value="Chromosome"/>
</dbReference>
<dbReference type="GO" id="GO:0016829">
    <property type="term" value="F:lyase activity"/>
    <property type="evidence" value="ECO:0007669"/>
    <property type="project" value="UniProtKB-KW"/>
</dbReference>
<dbReference type="FunFam" id="3.30.2040.10:FF:000001">
    <property type="entry name" value="D-glutamate cyclase, mitochondrial"/>
    <property type="match status" value="1"/>
</dbReference>
<dbReference type="Gene3D" id="3.40.1640.10">
    <property type="entry name" value="PSTPO5379-like"/>
    <property type="match status" value="1"/>
</dbReference>
<dbReference type="Gene3D" id="3.30.2040.10">
    <property type="entry name" value="PSTPO5379-like domain"/>
    <property type="match status" value="1"/>
</dbReference>
<dbReference type="HAMAP" id="MF_01830">
    <property type="entry name" value="Hydro_lyase"/>
    <property type="match status" value="1"/>
</dbReference>
<dbReference type="InterPro" id="IPR009906">
    <property type="entry name" value="D-Glu_cyclase"/>
</dbReference>
<dbReference type="InterPro" id="IPR038021">
    <property type="entry name" value="Putative_hydro-lyase"/>
</dbReference>
<dbReference type="InterPro" id="IPR016938">
    <property type="entry name" value="UPF0317"/>
</dbReference>
<dbReference type="NCBIfam" id="NF003969">
    <property type="entry name" value="PRK05463.1"/>
    <property type="match status" value="1"/>
</dbReference>
<dbReference type="PANTHER" id="PTHR32022">
    <property type="entry name" value="D-GLUTAMATE CYCLASE, MITOCHONDRIAL"/>
    <property type="match status" value="1"/>
</dbReference>
<dbReference type="PANTHER" id="PTHR32022:SF10">
    <property type="entry name" value="D-GLUTAMATE CYCLASE, MITOCHONDRIAL"/>
    <property type="match status" value="1"/>
</dbReference>
<dbReference type="Pfam" id="PF07286">
    <property type="entry name" value="D-Glu_cyclase"/>
    <property type="match status" value="1"/>
</dbReference>
<dbReference type="PIRSF" id="PIRSF029755">
    <property type="entry name" value="UCP029755"/>
    <property type="match status" value="1"/>
</dbReference>
<dbReference type="SUPFAM" id="SSF160920">
    <property type="entry name" value="PSTPO5379-like"/>
    <property type="match status" value="1"/>
</dbReference>
<reference key="1">
    <citation type="journal article" date="2001" name="Proc. Natl. Acad. Sci. U.S.A.">
        <title>Genome sequence of an industrial microorganism Streptomyces avermitilis: deducing the ability of producing secondary metabolites.</title>
        <authorList>
            <person name="Omura S."/>
            <person name="Ikeda H."/>
            <person name="Ishikawa J."/>
            <person name="Hanamoto A."/>
            <person name="Takahashi C."/>
            <person name="Shinose M."/>
            <person name="Takahashi Y."/>
            <person name="Horikawa H."/>
            <person name="Nakazawa H."/>
            <person name="Osonoe T."/>
            <person name="Kikuchi H."/>
            <person name="Shiba T."/>
            <person name="Sakaki Y."/>
            <person name="Hattori M."/>
        </authorList>
    </citation>
    <scope>NUCLEOTIDE SEQUENCE [LARGE SCALE GENOMIC DNA]</scope>
    <source>
        <strain>ATCC 31267 / DSM 46492 / JCM 5070 / NBRC 14893 / NCIMB 12804 / NRRL 8165 / MA-4680</strain>
    </source>
</reference>
<reference key="2">
    <citation type="journal article" date="2003" name="Nat. Biotechnol.">
        <title>Complete genome sequence and comparative analysis of the industrial microorganism Streptomyces avermitilis.</title>
        <authorList>
            <person name="Ikeda H."/>
            <person name="Ishikawa J."/>
            <person name="Hanamoto A."/>
            <person name="Shinose M."/>
            <person name="Kikuchi H."/>
            <person name="Shiba T."/>
            <person name="Sakaki Y."/>
            <person name="Hattori M."/>
            <person name="Omura S."/>
        </authorList>
    </citation>
    <scope>NUCLEOTIDE SEQUENCE [LARGE SCALE GENOMIC DNA]</scope>
    <source>
        <strain>ATCC 31267 / DSM 46492 / JCM 5070 / NBRC 14893 / NCIMB 12804 / NRRL 8165 / MA-4680</strain>
    </source>
</reference>
<organism>
    <name type="scientific">Streptomyces avermitilis (strain ATCC 31267 / DSM 46492 / JCM 5070 / NBRC 14893 / NCIMB 12804 / NRRL 8165 / MA-4680)</name>
    <dbReference type="NCBI Taxonomy" id="227882"/>
    <lineage>
        <taxon>Bacteria</taxon>
        <taxon>Bacillati</taxon>
        <taxon>Actinomycetota</taxon>
        <taxon>Actinomycetes</taxon>
        <taxon>Kitasatosporales</taxon>
        <taxon>Streptomycetaceae</taxon>
        <taxon>Streptomyces</taxon>
    </lineage>
</organism>
<name>Y6940_STRAW</name>
<keyword id="KW-0456">Lyase</keyword>
<keyword id="KW-1185">Reference proteome</keyword>
<comment type="similarity">
    <text evidence="1">Belongs to the D-glutamate cyclase family.</text>
</comment>
<protein>
    <recommendedName>
        <fullName evidence="1">Putative hydro-lyase SAV_6940</fullName>
        <ecNumber evidence="1">4.2.1.-</ecNumber>
    </recommendedName>
</protein>
<sequence>MNRVTPDRPLSRIDGHAHAWTPRKARARFRWGVFGPTAGVAAGHTQANLISLPADWAYDMLLFCQRNPKPCPVLDVTDAGSWTTPLAEGADLRTDLPRYRVWENGELVAEPTDVVAYWRDDLVSFLIGCSFTFEWALSEAGVPMRHIEQGRNVSMYVTSRACRPAGRLHGPMVVSMRPVPPEHLAAAIRESTMLPAVHGSPVHCGDPSGLGIDDLGRPDFGDPVDAEPDDIPVFWACGVTPQAAVMASRPPFAITHAPGQMFLTDARDEQYRVA</sequence>
<proteinExistence type="inferred from homology"/>
<gene>
    <name type="ordered locus">SAV_6940</name>
</gene>
<accession>Q827I4</accession>